<proteinExistence type="inferred from homology"/>
<keyword id="KW-0120">Carbon dioxide fixation</keyword>
<keyword id="KW-0456">Lyase</keyword>
<keyword id="KW-0460">Magnesium</keyword>
<accession>C3MJE5</accession>
<feature type="chain" id="PRO_1000216173" description="Phosphoenolpyruvate carboxylase">
    <location>
        <begin position="1"/>
        <end position="511"/>
    </location>
</feature>
<gene>
    <name evidence="1" type="primary">ppcA</name>
    <name type="ordered locus">LS215_0069</name>
</gene>
<evidence type="ECO:0000255" key="1">
    <source>
        <dbReference type="HAMAP-Rule" id="MF_01904"/>
    </source>
</evidence>
<dbReference type="EC" id="4.1.1.31" evidence="1"/>
<dbReference type="EMBL" id="CP001399">
    <property type="protein sequence ID" value="ACP34223.1"/>
    <property type="molecule type" value="Genomic_DNA"/>
</dbReference>
<dbReference type="RefSeq" id="WP_012712741.1">
    <property type="nucleotide sequence ID" value="NC_012589.1"/>
</dbReference>
<dbReference type="SMR" id="C3MJE5"/>
<dbReference type="GeneID" id="7797134"/>
<dbReference type="KEGG" id="sis:LS215_0069"/>
<dbReference type="HOGENOM" id="CLU_517433_0_0_2"/>
<dbReference type="OrthoDB" id="85849at2157"/>
<dbReference type="Proteomes" id="UP000001747">
    <property type="component" value="Chromosome"/>
</dbReference>
<dbReference type="GO" id="GO:0000287">
    <property type="term" value="F:magnesium ion binding"/>
    <property type="evidence" value="ECO:0007669"/>
    <property type="project" value="UniProtKB-UniRule"/>
</dbReference>
<dbReference type="GO" id="GO:0008964">
    <property type="term" value="F:phosphoenolpyruvate carboxylase activity"/>
    <property type="evidence" value="ECO:0007669"/>
    <property type="project" value="UniProtKB-UniRule"/>
</dbReference>
<dbReference type="GO" id="GO:0015977">
    <property type="term" value="P:carbon fixation"/>
    <property type="evidence" value="ECO:0007669"/>
    <property type="project" value="UniProtKB-UniRule"/>
</dbReference>
<dbReference type="GO" id="GO:0006107">
    <property type="term" value="P:oxaloacetate metabolic process"/>
    <property type="evidence" value="ECO:0007669"/>
    <property type="project" value="UniProtKB-UniRule"/>
</dbReference>
<dbReference type="GO" id="GO:0006099">
    <property type="term" value="P:tricarboxylic acid cycle"/>
    <property type="evidence" value="ECO:0007669"/>
    <property type="project" value="InterPro"/>
</dbReference>
<dbReference type="HAMAP" id="MF_01904">
    <property type="entry name" value="PEPcase_type2"/>
    <property type="match status" value="1"/>
</dbReference>
<dbReference type="InterPro" id="IPR007566">
    <property type="entry name" value="PEP_COase_arc-type"/>
</dbReference>
<dbReference type="InterPro" id="IPR015813">
    <property type="entry name" value="Pyrv/PenolPyrv_kinase-like_dom"/>
</dbReference>
<dbReference type="NCBIfam" id="TIGR02751">
    <property type="entry name" value="PEPCase_arch"/>
    <property type="match status" value="1"/>
</dbReference>
<dbReference type="Pfam" id="PF14010">
    <property type="entry name" value="PEPcase_2"/>
    <property type="match status" value="1"/>
</dbReference>
<dbReference type="PIRSF" id="PIRSF006677">
    <property type="entry name" value="UCP006677"/>
    <property type="match status" value="1"/>
</dbReference>
<dbReference type="SUPFAM" id="SSF51621">
    <property type="entry name" value="Phosphoenolpyruvate/pyruvate domain"/>
    <property type="match status" value="1"/>
</dbReference>
<organism>
    <name type="scientific">Saccharolobus islandicus (strain L.S.2.15 / Lassen #1)</name>
    <name type="common">Sulfolobus islandicus</name>
    <dbReference type="NCBI Taxonomy" id="429572"/>
    <lineage>
        <taxon>Archaea</taxon>
        <taxon>Thermoproteota</taxon>
        <taxon>Thermoprotei</taxon>
        <taxon>Sulfolobales</taxon>
        <taxon>Sulfolobaceae</taxon>
        <taxon>Saccharolobus</taxon>
    </lineage>
</organism>
<protein>
    <recommendedName>
        <fullName evidence="1">Phosphoenolpyruvate carboxylase</fullName>
        <shortName evidence="1">PEPC</shortName>
        <shortName evidence="1">PEPCase</shortName>
        <ecNumber evidence="1">4.1.1.31</ecNumber>
    </recommendedName>
</protein>
<reference key="1">
    <citation type="journal article" date="2009" name="Proc. Natl. Acad. Sci. U.S.A.">
        <title>Biogeography of the Sulfolobus islandicus pan-genome.</title>
        <authorList>
            <person name="Reno M.L."/>
            <person name="Held N.L."/>
            <person name="Fields C.J."/>
            <person name="Burke P.V."/>
            <person name="Whitaker R.J."/>
        </authorList>
    </citation>
    <scope>NUCLEOTIDE SEQUENCE [LARGE SCALE GENOMIC DNA]</scope>
    <source>
        <strain>L.S.2.15 / Lassen #1</strain>
    </source>
</reference>
<sequence length="511" mass="58763">MRIIPRTMSTQHPDNAKVPEWAKSEVIEGEDEVKEAFLAYSMYGVHEVMWDAEGKDVDTHVVRKLLSNYPDYFREHILGKDVFLTYRLPNPKVEGADRKVFAETMESIPITYDLAEKFYGNGITVPVFEVILPMTTSNLEIISVARYYEKAVANEDELELYDGVKVKDLVGEIYPKVIEVIPLVEERDSLQNIDNIVEGYYKVIKPKYMRVFLARSDPAMNYGMITAVLSVKIALSELYKLSESLNFEIYPIIGVGSLPFRGHLSPENYEKVLEEYKGVYTYTIQSAFKYDYDYDKVKSAISSINNSRIGPAKILEKYEEDVLRKITILYTERYQPIIESLANAINDVSVLLPRRRARKLHIGLFGYSRSAGKVSLPRAISFVGSLYSIGIPPELIGISSLSNLDEKEWDIFKQNYVNFKHDLQTAARFFNWESFELIKDIWKISEDTIAKIKEDIDYAESVIGIKLGGIDYDSRKHILMSSLFLLSFKEKILQESKKYLYEMALIRRSLG</sequence>
<name>CAPPA_SACI2</name>
<comment type="function">
    <text evidence="1">Catalyzes the irreversible beta-carboxylation of phosphoenolpyruvate (PEP) to form oxaloacetate (OAA), a four-carbon dicarboxylic acid source for the tricarboxylic acid cycle.</text>
</comment>
<comment type="catalytic activity">
    <reaction evidence="1">
        <text>oxaloacetate + phosphate = phosphoenolpyruvate + hydrogencarbonate</text>
        <dbReference type="Rhea" id="RHEA:28370"/>
        <dbReference type="ChEBI" id="CHEBI:16452"/>
        <dbReference type="ChEBI" id="CHEBI:17544"/>
        <dbReference type="ChEBI" id="CHEBI:43474"/>
        <dbReference type="ChEBI" id="CHEBI:58702"/>
        <dbReference type="EC" id="4.1.1.31"/>
    </reaction>
</comment>
<comment type="cofactor">
    <cofactor evidence="1">
        <name>Mg(2+)</name>
        <dbReference type="ChEBI" id="CHEBI:18420"/>
    </cofactor>
</comment>
<comment type="subunit">
    <text evidence="1">Homotetramer.</text>
</comment>
<comment type="similarity">
    <text evidence="1">Belongs to the PEPCase type 2 family.</text>
</comment>